<organism>
    <name type="scientific">Arabidopsis thaliana</name>
    <name type="common">Mouse-ear cress</name>
    <dbReference type="NCBI Taxonomy" id="3702"/>
    <lineage>
        <taxon>Eukaryota</taxon>
        <taxon>Viridiplantae</taxon>
        <taxon>Streptophyta</taxon>
        <taxon>Embryophyta</taxon>
        <taxon>Tracheophyta</taxon>
        <taxon>Spermatophyta</taxon>
        <taxon>Magnoliopsida</taxon>
        <taxon>eudicotyledons</taxon>
        <taxon>Gunneridae</taxon>
        <taxon>Pentapetalae</taxon>
        <taxon>rosids</taxon>
        <taxon>malvids</taxon>
        <taxon>Brassicales</taxon>
        <taxon>Brassicaceae</taxon>
        <taxon>Camelineae</taxon>
        <taxon>Arabidopsis</taxon>
    </lineage>
</organism>
<protein>
    <recommendedName>
        <fullName evidence="6">Pseudo histidine-containing phosphotransfer protein 6</fullName>
    </recommendedName>
    <alternativeName>
        <fullName>Histidine-containing phosphotransfer protein 6</fullName>
    </alternativeName>
</protein>
<comment type="function">
    <text evidence="1 4">Functions as a two-component phosphorelay mediator between cytokinin sensor histidine kinases and response regulators (B-type ARRs). Plays an important role in propagating cytokinin signal transduction.</text>
</comment>
<comment type="subunit">
    <text evidence="5">Interacts with AHK5.</text>
</comment>
<comment type="subcellular location">
    <subcellularLocation>
        <location evidence="1">Cytoplasm</location>
        <location evidence="1">Cytosol</location>
    </subcellularLocation>
    <subcellularLocation>
        <location evidence="1">Nucleus</location>
    </subcellularLocation>
</comment>
<comment type="alternative products">
    <event type="alternative splicing"/>
    <isoform>
        <id>Q9SSC9-1</id>
        <name>1</name>
        <sequence type="displayed"/>
    </isoform>
    <text>A number of isoforms are produced. According to EST sequences.</text>
</comment>
<comment type="caution">
    <text evidence="6">Lacks the conserved active histidine at position 83 that mediates the phosphotransfer. Shows a conserved HPt domain that may have some alternative degenerated phosphorelay role in cell signaling.</text>
</comment>
<comment type="sequence caution" evidence="6">
    <conflict type="erroneous gene model prediction">
        <sequence resource="EMBL-CDS" id="AAD55469"/>
    </conflict>
</comment>
<feature type="chain" id="PRO_0000074932" description="Pseudo histidine-containing phosphotransfer protein 6">
    <location>
        <begin position="1"/>
        <end position="154"/>
    </location>
</feature>
<feature type="domain" description="HPt" evidence="3">
    <location>
        <begin position="41"/>
        <end position="137"/>
    </location>
</feature>
<feature type="modified residue" description="N-acetylmethionine" evidence="2">
    <location>
        <position position="1"/>
    </location>
</feature>
<gene>
    <name type="primary">AHP6</name>
    <name type="synonym">AHP6b</name>
    <name type="ordered locus">At1g80100</name>
    <name type="ORF">F18B13.18</name>
</gene>
<dbReference type="EMBL" id="DQ093643">
    <property type="protein sequence ID" value="ABA29329.1"/>
    <property type="molecule type" value="mRNA"/>
</dbReference>
<dbReference type="EMBL" id="AC009322">
    <property type="protein sequence ID" value="AAD55469.1"/>
    <property type="status" value="ALT_SEQ"/>
    <property type="molecule type" value="Genomic_DNA"/>
</dbReference>
<dbReference type="EMBL" id="CP002684">
    <property type="protein sequence ID" value="AEE36356.1"/>
    <property type="molecule type" value="Genomic_DNA"/>
</dbReference>
<dbReference type="PIR" id="E96832">
    <property type="entry name" value="E96832"/>
</dbReference>
<dbReference type="RefSeq" id="NP_178127.2">
    <molecule id="Q9SSC9-1"/>
    <property type="nucleotide sequence ID" value="NM_106659.3"/>
</dbReference>
<dbReference type="SMR" id="Q9SSC9"/>
<dbReference type="BioGRID" id="29568">
    <property type="interactions" value="1"/>
</dbReference>
<dbReference type="FunCoup" id="Q9SSC9">
    <property type="interactions" value="292"/>
</dbReference>
<dbReference type="STRING" id="3702.Q9SSC9"/>
<dbReference type="PaxDb" id="3702-AT1G80100.1"/>
<dbReference type="EnsemblPlants" id="AT1G80100.1">
    <molecule id="Q9SSC9-1"/>
    <property type="protein sequence ID" value="AT1G80100.1"/>
    <property type="gene ID" value="AT1G80100"/>
</dbReference>
<dbReference type="GeneID" id="844350"/>
<dbReference type="Gramene" id="AT1G80100.1">
    <molecule id="Q9SSC9-1"/>
    <property type="protein sequence ID" value="AT1G80100.1"/>
    <property type="gene ID" value="AT1G80100"/>
</dbReference>
<dbReference type="KEGG" id="ath:AT1G80100"/>
<dbReference type="Araport" id="AT1G80100"/>
<dbReference type="TAIR" id="AT1G80100">
    <property type="gene designation" value="HP6"/>
</dbReference>
<dbReference type="eggNOG" id="KOG4747">
    <property type="taxonomic scope" value="Eukaryota"/>
</dbReference>
<dbReference type="InParanoid" id="Q9SSC9"/>
<dbReference type="OMA" id="ASEHNNR"/>
<dbReference type="OrthoDB" id="1673781at2759"/>
<dbReference type="PhylomeDB" id="Q9SSC9"/>
<dbReference type="PRO" id="PR:Q9SSC9"/>
<dbReference type="Proteomes" id="UP000006548">
    <property type="component" value="Chromosome 1"/>
</dbReference>
<dbReference type="ExpressionAtlas" id="Q9SSC9">
    <property type="expression patterns" value="baseline and differential"/>
</dbReference>
<dbReference type="GO" id="GO:0005737">
    <property type="term" value="C:cytoplasm"/>
    <property type="evidence" value="ECO:0000250"/>
    <property type="project" value="UniProtKB"/>
</dbReference>
<dbReference type="GO" id="GO:0005829">
    <property type="term" value="C:cytosol"/>
    <property type="evidence" value="ECO:0007669"/>
    <property type="project" value="UniProtKB-SubCell"/>
</dbReference>
<dbReference type="GO" id="GO:0005634">
    <property type="term" value="C:nucleus"/>
    <property type="evidence" value="ECO:0000250"/>
    <property type="project" value="UniProtKB"/>
</dbReference>
<dbReference type="GO" id="GO:0043424">
    <property type="term" value="F:protein histidine kinase binding"/>
    <property type="evidence" value="ECO:0007669"/>
    <property type="project" value="InterPro"/>
</dbReference>
<dbReference type="GO" id="GO:0009736">
    <property type="term" value="P:cytokinin-activated signaling pathway"/>
    <property type="evidence" value="ECO:0000315"/>
    <property type="project" value="TAIR"/>
</dbReference>
<dbReference type="GO" id="GO:0000160">
    <property type="term" value="P:phosphorelay signal transduction system"/>
    <property type="evidence" value="ECO:0000314"/>
    <property type="project" value="TAIR"/>
</dbReference>
<dbReference type="GO" id="GO:0009735">
    <property type="term" value="P:response to cytokinin"/>
    <property type="evidence" value="ECO:0000270"/>
    <property type="project" value="TAIR"/>
</dbReference>
<dbReference type="GO" id="GO:0010089">
    <property type="term" value="P:xylem development"/>
    <property type="evidence" value="ECO:0000315"/>
    <property type="project" value="TAIR"/>
</dbReference>
<dbReference type="FunFam" id="1.20.120.160:FF:000001">
    <property type="entry name" value="Histidine-containing phosphotransfer protein 1"/>
    <property type="match status" value="1"/>
</dbReference>
<dbReference type="Gene3D" id="1.20.120.160">
    <property type="entry name" value="HPT domain"/>
    <property type="match status" value="1"/>
</dbReference>
<dbReference type="InterPro" id="IPR045871">
    <property type="entry name" value="AHP1-5/YPD1"/>
</dbReference>
<dbReference type="InterPro" id="IPR036641">
    <property type="entry name" value="HPT_dom_sf"/>
</dbReference>
<dbReference type="InterPro" id="IPR008207">
    <property type="entry name" value="Sig_transdc_His_kin_Hpt_dom"/>
</dbReference>
<dbReference type="PANTHER" id="PTHR28242">
    <property type="entry name" value="PHOSPHORELAY INTERMEDIATE PROTEIN YPD1"/>
    <property type="match status" value="1"/>
</dbReference>
<dbReference type="PANTHER" id="PTHR28242:SF46">
    <property type="entry name" value="PSEUDO HISTIDINE-CONTAINING PHOSPHOTRANSFER PROTEIN 6"/>
    <property type="match status" value="1"/>
</dbReference>
<dbReference type="Pfam" id="PF01627">
    <property type="entry name" value="Hpt"/>
    <property type="match status" value="1"/>
</dbReference>
<dbReference type="SUPFAM" id="SSF47226">
    <property type="entry name" value="Histidine-containing phosphotransfer domain, HPT domain"/>
    <property type="match status" value="1"/>
</dbReference>
<dbReference type="PROSITE" id="PS50894">
    <property type="entry name" value="HPT"/>
    <property type="match status" value="1"/>
</dbReference>
<evidence type="ECO:0000250" key="1">
    <source>
        <dbReference type="UniProtKB" id="Q8L9T7"/>
    </source>
</evidence>
<evidence type="ECO:0000250" key="2">
    <source>
        <dbReference type="UniProtKB" id="Q9ZNV8"/>
    </source>
</evidence>
<evidence type="ECO:0000255" key="3">
    <source>
        <dbReference type="PROSITE-ProRule" id="PRU00110"/>
    </source>
</evidence>
<evidence type="ECO:0000269" key="4">
    <source>
    </source>
</evidence>
<evidence type="ECO:0000269" key="5">
    <source>
    </source>
</evidence>
<evidence type="ECO:0000305" key="6"/>
<accession>Q9SSC9</accession>
<accession>Q104N2</accession>
<keyword id="KW-0007">Acetylation</keyword>
<keyword id="KW-0025">Alternative splicing</keyword>
<keyword id="KW-0932">Cytokinin signaling pathway</keyword>
<keyword id="KW-0963">Cytoplasm</keyword>
<keyword id="KW-0539">Nucleus</keyword>
<keyword id="KW-1185">Reference proteome</keyword>
<keyword id="KW-0902">Two-component regulatory system</keyword>
<sequence>MLGLGVDRLQADINRLLASLFHQGVLDEQFLQLQQLQDETSPNFVYDVINIYFDESEKLLRNLRLLLMDREFSDYKKIGLHLNQLVGSSSSIGARRVRNVCVAFRSASELSNRPGCLRGLEVVEHEYHYLKNMMHELFQLEQQRILAAGVRYPM</sequence>
<name>AHP6_ARATH</name>
<proteinExistence type="evidence at protein level"/>
<reference key="1">
    <citation type="submission" date="2005-06" db="EMBL/GenBank/DDBJ databases">
        <title>Cytokinin signaling and its repressor AHP6 regulate cell fate during vascular development.</title>
        <authorList>
            <person name="Mahonen A.P."/>
            <person name="Bishopp A."/>
            <person name="Helariutta Y."/>
        </authorList>
    </citation>
    <scope>NUCLEOTIDE SEQUENCE [MRNA]</scope>
    <source>
        <strain>cv. Columbia</strain>
    </source>
</reference>
<reference key="2">
    <citation type="journal article" date="2000" name="Nature">
        <title>Sequence and analysis of chromosome 1 of the plant Arabidopsis thaliana.</title>
        <authorList>
            <person name="Theologis A."/>
            <person name="Ecker J.R."/>
            <person name="Palm C.J."/>
            <person name="Federspiel N.A."/>
            <person name="Kaul S."/>
            <person name="White O."/>
            <person name="Alonso J."/>
            <person name="Altafi H."/>
            <person name="Araujo R."/>
            <person name="Bowman C.L."/>
            <person name="Brooks S.Y."/>
            <person name="Buehler E."/>
            <person name="Chan A."/>
            <person name="Chao Q."/>
            <person name="Chen H."/>
            <person name="Cheuk R.F."/>
            <person name="Chin C.W."/>
            <person name="Chung M.K."/>
            <person name="Conn L."/>
            <person name="Conway A.B."/>
            <person name="Conway A.R."/>
            <person name="Creasy T.H."/>
            <person name="Dewar K."/>
            <person name="Dunn P."/>
            <person name="Etgu P."/>
            <person name="Feldblyum T.V."/>
            <person name="Feng J.-D."/>
            <person name="Fong B."/>
            <person name="Fujii C.Y."/>
            <person name="Gill J.E."/>
            <person name="Goldsmith A.D."/>
            <person name="Haas B."/>
            <person name="Hansen N.F."/>
            <person name="Hughes B."/>
            <person name="Huizar L."/>
            <person name="Hunter J.L."/>
            <person name="Jenkins J."/>
            <person name="Johnson-Hopson C."/>
            <person name="Khan S."/>
            <person name="Khaykin E."/>
            <person name="Kim C.J."/>
            <person name="Koo H.L."/>
            <person name="Kremenetskaia I."/>
            <person name="Kurtz D.B."/>
            <person name="Kwan A."/>
            <person name="Lam B."/>
            <person name="Langin-Hooper S."/>
            <person name="Lee A."/>
            <person name="Lee J.M."/>
            <person name="Lenz C.A."/>
            <person name="Li J.H."/>
            <person name="Li Y.-P."/>
            <person name="Lin X."/>
            <person name="Liu S.X."/>
            <person name="Liu Z.A."/>
            <person name="Luros J.S."/>
            <person name="Maiti R."/>
            <person name="Marziali A."/>
            <person name="Militscher J."/>
            <person name="Miranda M."/>
            <person name="Nguyen M."/>
            <person name="Nierman W.C."/>
            <person name="Osborne B.I."/>
            <person name="Pai G."/>
            <person name="Peterson J."/>
            <person name="Pham P.K."/>
            <person name="Rizzo M."/>
            <person name="Rooney T."/>
            <person name="Rowley D."/>
            <person name="Sakano H."/>
            <person name="Salzberg S.L."/>
            <person name="Schwartz J.R."/>
            <person name="Shinn P."/>
            <person name="Southwick A.M."/>
            <person name="Sun H."/>
            <person name="Tallon L.J."/>
            <person name="Tambunga G."/>
            <person name="Toriumi M.J."/>
            <person name="Town C.D."/>
            <person name="Utterback T."/>
            <person name="Van Aken S."/>
            <person name="Vaysberg M."/>
            <person name="Vysotskaia V.S."/>
            <person name="Walker M."/>
            <person name="Wu D."/>
            <person name="Yu G."/>
            <person name="Fraser C.M."/>
            <person name="Venter J.C."/>
            <person name="Davis R.W."/>
        </authorList>
    </citation>
    <scope>NUCLEOTIDE SEQUENCE [LARGE SCALE GENOMIC DNA]</scope>
    <source>
        <strain>cv. Columbia</strain>
    </source>
</reference>
<reference key="3">
    <citation type="journal article" date="2017" name="Plant J.">
        <title>Araport11: a complete reannotation of the Arabidopsis thaliana reference genome.</title>
        <authorList>
            <person name="Cheng C.Y."/>
            <person name="Krishnakumar V."/>
            <person name="Chan A.P."/>
            <person name="Thibaud-Nissen F."/>
            <person name="Schobel S."/>
            <person name="Town C.D."/>
        </authorList>
    </citation>
    <scope>GENOME REANNOTATION</scope>
    <source>
        <strain>cv. Columbia</strain>
    </source>
</reference>
<reference key="4">
    <citation type="journal article" date="2002" name="Plant Physiol.">
        <title>Two-component signal transduction pathways in Arabidopsis.</title>
        <authorList>
            <person name="Hwang I."/>
            <person name="Chen H.-C."/>
            <person name="Sheen J."/>
        </authorList>
    </citation>
    <scope>GENE FAMILY</scope>
    <scope>NOMENCLATURE</scope>
    <scope>FUNCTION</scope>
</reference>
<reference key="5">
    <citation type="journal article" date="2013" name="Mol. Plant">
        <title>Structure-function analysis of Arabidopsis thaliana histidine kinase AHK5 bound to its cognate phosphotransfer protein AHP1.</title>
        <authorList>
            <person name="Bauer J."/>
            <person name="Reiss K."/>
            <person name="Veerabagu M."/>
            <person name="Heunemann M."/>
            <person name="Harter K."/>
            <person name="Stehle T."/>
        </authorList>
    </citation>
    <scope>INTERACTION WITH AHK5</scope>
</reference>